<sequence>MTETHNDPEELARRVASLSAQNERLAQILVEARSKIVGLQQQIDDLAQPPSTYATFIRSYSDGTADVMVQGRKMRLTSLPAAMVSTARPGQQVRLNEAMAIVETMTYDHTGELVTVKELIGTHRAMVVGRGDDERVVNLAGSLIGRDGPTIRTGDSVLVDLKAGYALEKIDKSEVEELVLEEVPRVAYEDIGGLSRQIDTIKDAVELPFLHPDLYREHGLKAPKGILLYGPPGCGKTLIAKAVAHSLAQTVGQGNNTPTDDTRGYFLNIKGPELLNKYVGETERQIRLIFTRARDKAAQGHPVVVFFDEMESLFRTRGTGLSSDVETTIVPQLLAEIDGVERLDNVIVIGASNREDMIDPAILRPGRLDVKIKIERPDAEAALDIFSKYLTPDLPIHPVDLAEHGGNAQDAVTAMGQRVVEHMYATTPDNQFLEVTYASGDKETLYFKDFSSGAMIQNIVDRAKKAAIKGYLSHGTRGLQVEHLLAACDDEFQENEDLPNTTNPDDWARISGKKGERIVFIRTIVQRKGEGKNPTPAKAIETPHNTGPYL</sequence>
<reference key="1">
    <citation type="journal article" date="2009" name="Stand. Genomic Sci.">
        <title>Complete genome sequence of Jonesia denitrificans type strain (Prevot 55134).</title>
        <authorList>
            <person name="Pukall R."/>
            <person name="Gehrich-Schroter G."/>
            <person name="Lapidus A."/>
            <person name="Nolan M."/>
            <person name="Glavina Del Rio T."/>
            <person name="Lucas S."/>
            <person name="Chen F."/>
            <person name="Tice H."/>
            <person name="Pitluck S."/>
            <person name="Cheng J.F."/>
            <person name="Copeland A."/>
            <person name="Saunders E."/>
            <person name="Brettin T."/>
            <person name="Detter J.C."/>
            <person name="Bruce D."/>
            <person name="Goodwin L."/>
            <person name="Pati A."/>
            <person name="Ivanova N."/>
            <person name="Mavromatis K."/>
            <person name="Ovchinnikova G."/>
            <person name="Chen A."/>
            <person name="Palaniappan K."/>
            <person name="Land M."/>
            <person name="Hauser L."/>
            <person name="Chang Y.J."/>
            <person name="Jeffries C.D."/>
            <person name="Chain P."/>
            <person name="Goker M."/>
            <person name="Bristow J."/>
            <person name="Eisen J.A."/>
            <person name="Markowitz V."/>
            <person name="Hugenholtz P."/>
            <person name="Kyrpides N.C."/>
            <person name="Klenk H.P."/>
            <person name="Han C."/>
        </authorList>
    </citation>
    <scope>NUCLEOTIDE SEQUENCE [LARGE SCALE GENOMIC DNA]</scope>
    <source>
        <strain>ATCC 14870 / DSM 20603 / BCRC 15368 / CIP 55.134 / JCM 11481 / NBRC 15587 / NCTC 10816 / Prevot 55134</strain>
    </source>
</reference>
<dbReference type="EMBL" id="CP001706">
    <property type="protein sequence ID" value="ACV08857.1"/>
    <property type="molecule type" value="Genomic_DNA"/>
</dbReference>
<dbReference type="RefSeq" id="WP_015771485.1">
    <property type="nucleotide sequence ID" value="NC_013174.1"/>
</dbReference>
<dbReference type="SMR" id="C7R400"/>
<dbReference type="STRING" id="471856.Jden_1201"/>
<dbReference type="KEGG" id="jde:Jden_1201"/>
<dbReference type="eggNOG" id="COG1222">
    <property type="taxonomic scope" value="Bacteria"/>
</dbReference>
<dbReference type="HOGENOM" id="CLU_036054_0_0_11"/>
<dbReference type="OrthoDB" id="9809379at2"/>
<dbReference type="UniPathway" id="UPA00997"/>
<dbReference type="Proteomes" id="UP000000628">
    <property type="component" value="Chromosome"/>
</dbReference>
<dbReference type="GO" id="GO:0000502">
    <property type="term" value="C:proteasome complex"/>
    <property type="evidence" value="ECO:0007669"/>
    <property type="project" value="UniProtKB-KW"/>
</dbReference>
<dbReference type="GO" id="GO:0005524">
    <property type="term" value="F:ATP binding"/>
    <property type="evidence" value="ECO:0007669"/>
    <property type="project" value="UniProtKB-UniRule"/>
</dbReference>
<dbReference type="GO" id="GO:0016887">
    <property type="term" value="F:ATP hydrolysis activity"/>
    <property type="evidence" value="ECO:0007669"/>
    <property type="project" value="UniProtKB-UniRule"/>
</dbReference>
<dbReference type="GO" id="GO:0019941">
    <property type="term" value="P:modification-dependent protein catabolic process"/>
    <property type="evidence" value="ECO:0007669"/>
    <property type="project" value="InterPro"/>
</dbReference>
<dbReference type="GO" id="GO:0010498">
    <property type="term" value="P:proteasomal protein catabolic process"/>
    <property type="evidence" value="ECO:0007669"/>
    <property type="project" value="InterPro"/>
</dbReference>
<dbReference type="FunFam" id="3.40.50.300:FF:001025">
    <property type="entry name" value="ATPase family, AAA domain-containing 2B"/>
    <property type="match status" value="1"/>
</dbReference>
<dbReference type="Gene3D" id="1.10.8.60">
    <property type="match status" value="1"/>
</dbReference>
<dbReference type="Gene3D" id="1.20.5.170">
    <property type="match status" value="1"/>
</dbReference>
<dbReference type="Gene3D" id="2.40.50.140">
    <property type="entry name" value="Nucleic acid-binding proteins"/>
    <property type="match status" value="2"/>
</dbReference>
<dbReference type="Gene3D" id="3.40.50.300">
    <property type="entry name" value="P-loop containing nucleotide triphosphate hydrolases"/>
    <property type="match status" value="1"/>
</dbReference>
<dbReference type="HAMAP" id="MF_02112">
    <property type="entry name" value="ARC_ATPase"/>
    <property type="match status" value="1"/>
</dbReference>
<dbReference type="InterPro" id="IPR003593">
    <property type="entry name" value="AAA+_ATPase"/>
</dbReference>
<dbReference type="InterPro" id="IPR050168">
    <property type="entry name" value="AAA_ATPase_domain"/>
</dbReference>
<dbReference type="InterPro" id="IPR003959">
    <property type="entry name" value="ATPase_AAA_core"/>
</dbReference>
<dbReference type="InterPro" id="IPR003960">
    <property type="entry name" value="ATPase_AAA_CS"/>
</dbReference>
<dbReference type="InterPro" id="IPR012340">
    <property type="entry name" value="NA-bd_OB-fold"/>
</dbReference>
<dbReference type="InterPro" id="IPR027417">
    <property type="entry name" value="P-loop_NTPase"/>
</dbReference>
<dbReference type="InterPro" id="IPR032501">
    <property type="entry name" value="Prot_ATP_ID_OB_2nd"/>
</dbReference>
<dbReference type="InterPro" id="IPR041626">
    <property type="entry name" value="Prot_ATP_ID_OB_N"/>
</dbReference>
<dbReference type="InterPro" id="IPR022482">
    <property type="entry name" value="Proteasome_ATPase"/>
</dbReference>
<dbReference type="NCBIfam" id="TIGR03689">
    <property type="entry name" value="pup_AAA"/>
    <property type="match status" value="1"/>
</dbReference>
<dbReference type="PANTHER" id="PTHR23077">
    <property type="entry name" value="AAA-FAMILY ATPASE"/>
    <property type="match status" value="1"/>
</dbReference>
<dbReference type="PANTHER" id="PTHR23077:SF144">
    <property type="entry name" value="PROTEASOME-ASSOCIATED ATPASE"/>
    <property type="match status" value="1"/>
</dbReference>
<dbReference type="Pfam" id="PF00004">
    <property type="entry name" value="AAA"/>
    <property type="match status" value="1"/>
</dbReference>
<dbReference type="Pfam" id="PF16450">
    <property type="entry name" value="Prot_ATP_ID_OB_C"/>
    <property type="match status" value="1"/>
</dbReference>
<dbReference type="Pfam" id="PF17758">
    <property type="entry name" value="Prot_ATP_ID_OB_N"/>
    <property type="match status" value="1"/>
</dbReference>
<dbReference type="SMART" id="SM00382">
    <property type="entry name" value="AAA"/>
    <property type="match status" value="1"/>
</dbReference>
<dbReference type="SUPFAM" id="SSF52540">
    <property type="entry name" value="P-loop containing nucleoside triphosphate hydrolases"/>
    <property type="match status" value="1"/>
</dbReference>
<dbReference type="PROSITE" id="PS00674">
    <property type="entry name" value="AAA"/>
    <property type="match status" value="1"/>
</dbReference>
<organism>
    <name type="scientific">Jonesia denitrificans (strain ATCC 14870 / DSM 20603 / BCRC 15368 / CIP 55.134 / JCM 11481 / NBRC 15587 / NCTC 10816 / Prevot 55134)</name>
    <name type="common">Listeria denitrificans</name>
    <dbReference type="NCBI Taxonomy" id="471856"/>
    <lineage>
        <taxon>Bacteria</taxon>
        <taxon>Bacillati</taxon>
        <taxon>Actinomycetota</taxon>
        <taxon>Actinomycetes</taxon>
        <taxon>Micrococcales</taxon>
        <taxon>Jonesiaceae</taxon>
        <taxon>Jonesia</taxon>
    </lineage>
</organism>
<evidence type="ECO:0000255" key="1">
    <source>
        <dbReference type="HAMAP-Rule" id="MF_02112"/>
    </source>
</evidence>
<evidence type="ECO:0000256" key="2">
    <source>
        <dbReference type="SAM" id="MobiDB-lite"/>
    </source>
</evidence>
<gene>
    <name evidence="1" type="primary">arc</name>
    <name type="ordered locus">Jden_1201</name>
</gene>
<proteinExistence type="inferred from homology"/>
<keyword id="KW-0067">ATP-binding</keyword>
<keyword id="KW-0143">Chaperone</keyword>
<keyword id="KW-0175">Coiled coil</keyword>
<keyword id="KW-0547">Nucleotide-binding</keyword>
<keyword id="KW-0647">Proteasome</keyword>
<keyword id="KW-1185">Reference proteome</keyword>
<accession>C7R400</accession>
<feature type="chain" id="PRO_0000396987" description="Proteasome-associated ATPase">
    <location>
        <begin position="1"/>
        <end position="550"/>
    </location>
</feature>
<feature type="region of interest" description="Disordered" evidence="2">
    <location>
        <begin position="528"/>
        <end position="550"/>
    </location>
</feature>
<feature type="region of interest" description="Docks into pockets in the proteasome alpha-ring" evidence="1">
    <location>
        <begin position="549"/>
        <end position="550"/>
    </location>
</feature>
<feature type="coiled-coil region" evidence="1">
    <location>
        <begin position="9"/>
        <end position="48"/>
    </location>
</feature>
<feature type="binding site" evidence="1">
    <location>
        <begin position="233"/>
        <end position="238"/>
    </location>
    <ligand>
        <name>ATP</name>
        <dbReference type="ChEBI" id="CHEBI:30616"/>
    </ligand>
</feature>
<name>ARC_JONDD</name>
<comment type="function">
    <text evidence="1">ATPase which is responsible for recognizing, binding, unfolding and translocation of pupylated proteins into the bacterial 20S proteasome core particle. May be essential for opening the gate of the 20S proteasome via an interaction with its C-terminus, thereby allowing substrate entry and access to the site of proteolysis. Thus, the C-termini of the proteasomal ATPase may function like a 'key in a lock' to induce gate opening and therefore regulate proteolysis.</text>
</comment>
<comment type="pathway">
    <text evidence="1">Protein degradation; proteasomal Pup-dependent pathway.</text>
</comment>
<comment type="subunit">
    <text evidence="1">Homohexamer. Assembles into a hexameric ring structure that caps the 20S proteasome core. Strongly interacts with the prokaryotic ubiquitin-like protein Pup through a hydrophobic interface; the interacting region of ARC lies in its N-terminal coiled-coil domain. There is one Pup binding site per ARC hexamer ring. Upon ATP-binding, the C-terminus of ARC interacts with the alpha-rings of the proteasome core, possibly by binding to the intersubunit pockets.</text>
</comment>
<comment type="domain">
    <text evidence="1">Consists of three main regions, an N-terminal coiled-coil domain that binds to protein Pup and functions as a docking station, an interdomain involved in ARC hexamerization, and a C-terminal ATPase domain of the AAA type.</text>
</comment>
<comment type="similarity">
    <text evidence="1">Belongs to the AAA ATPase family.</text>
</comment>
<protein>
    <recommendedName>
        <fullName evidence="1">Proteasome-associated ATPase</fullName>
    </recommendedName>
    <alternativeName>
        <fullName evidence="1">AAA ATPase forming ring-shaped complexes</fullName>
        <shortName evidence="1">ARC</shortName>
    </alternativeName>
    <alternativeName>
        <fullName evidence="1">Proteasomal ATPase</fullName>
    </alternativeName>
</protein>